<proteinExistence type="inferred from homology"/>
<protein>
    <recommendedName>
        <fullName>Ubiquitin-fold modifier-conjugating enzyme 1</fullName>
    </recommendedName>
    <alternativeName>
        <fullName>Ufm1-conjugating enzyme 1</fullName>
    </alternativeName>
</protein>
<sequence>MVDDSTRKTLSNIPLLQTRAGPREKDIWVQRLKEEYQALIKYVENNKQSGSDWFRLESNKEGTKWFGKCWYMHNLLKYEFEVEFDIPVTYPTTAPEIAVPELDGKTAKMYRGGKICLTEHFKPLWARNVPKFGIAHAMALGLAPWLAVEIPDLIEKGIISYKEK</sequence>
<reference key="1">
    <citation type="journal article" date="2007" name="Nature">
        <title>Evolution of genes and genomes on the Drosophila phylogeny.</title>
        <authorList>
            <consortium name="Drosophila 12 genomes consortium"/>
        </authorList>
    </citation>
    <scope>NUCLEOTIDE SEQUENCE [LARGE SCALE GENOMIC DNA]</scope>
    <source>
        <strain>Tucson 14030-0811.24</strain>
    </source>
</reference>
<keyword id="KW-1185">Reference proteome</keyword>
<keyword id="KW-0833">Ubl conjugation pathway</keyword>
<name>UFC1_DROWI</name>
<gene>
    <name type="ORF">GK10642</name>
</gene>
<accession>B4MIX7</accession>
<dbReference type="EMBL" id="CH963719">
    <property type="protein sequence ID" value="EDW72066.1"/>
    <property type="molecule type" value="Genomic_DNA"/>
</dbReference>
<dbReference type="SMR" id="B4MIX7"/>
<dbReference type="STRING" id="7260.B4MIX7"/>
<dbReference type="EnsemblMetazoa" id="FBtr0241293">
    <property type="protein sequence ID" value="FBpp0239785"/>
    <property type="gene ID" value="FBgn0212655"/>
</dbReference>
<dbReference type="EnsemblMetazoa" id="XM_002061044.4">
    <property type="protein sequence ID" value="XP_002061080.1"/>
    <property type="gene ID" value="LOC6637886"/>
</dbReference>
<dbReference type="GeneID" id="6637886"/>
<dbReference type="KEGG" id="dwi:6637886"/>
<dbReference type="CTD" id="51506"/>
<dbReference type="eggNOG" id="KOG3357">
    <property type="taxonomic scope" value="Eukaryota"/>
</dbReference>
<dbReference type="HOGENOM" id="CLU_101170_0_0_1"/>
<dbReference type="OMA" id="LWQKNVP"/>
<dbReference type="OrthoDB" id="10256182at2759"/>
<dbReference type="PhylomeDB" id="B4MIX7"/>
<dbReference type="Proteomes" id="UP000007798">
    <property type="component" value="Unassembled WGS sequence"/>
</dbReference>
<dbReference type="GO" id="GO:0005737">
    <property type="term" value="C:cytoplasm"/>
    <property type="evidence" value="ECO:0007669"/>
    <property type="project" value="TreeGrafter"/>
</dbReference>
<dbReference type="GO" id="GO:0061657">
    <property type="term" value="F:UFM1 conjugating enzyme activity"/>
    <property type="evidence" value="ECO:0007669"/>
    <property type="project" value="InterPro"/>
</dbReference>
<dbReference type="GO" id="GO:1990592">
    <property type="term" value="P:protein K69-linked ufmylation"/>
    <property type="evidence" value="ECO:0007669"/>
    <property type="project" value="TreeGrafter"/>
</dbReference>
<dbReference type="CDD" id="cd11686">
    <property type="entry name" value="UBCc_UFC1"/>
    <property type="match status" value="1"/>
</dbReference>
<dbReference type="FunFam" id="3.10.110.10:FF:000042">
    <property type="entry name" value="Ubiquitin-fold modifier-conjugating enzyme 1"/>
    <property type="match status" value="1"/>
</dbReference>
<dbReference type="Gene3D" id="3.10.110.10">
    <property type="entry name" value="Ubiquitin Conjugating Enzyme"/>
    <property type="match status" value="1"/>
</dbReference>
<dbReference type="InterPro" id="IPR016135">
    <property type="entry name" value="UBQ-conjugating_enzyme/RWD"/>
</dbReference>
<dbReference type="InterPro" id="IPR014806">
    <property type="entry name" value="Ufc1"/>
</dbReference>
<dbReference type="PANTHER" id="PTHR12921">
    <property type="entry name" value="UBIQUITIN-FOLD MODIFIER-CONJUGATING ENZYME 1"/>
    <property type="match status" value="1"/>
</dbReference>
<dbReference type="PANTHER" id="PTHR12921:SF0">
    <property type="entry name" value="UBIQUITIN-FOLD MODIFIER-CONJUGATING ENZYME 1"/>
    <property type="match status" value="1"/>
</dbReference>
<dbReference type="Pfam" id="PF08694">
    <property type="entry name" value="UFC1"/>
    <property type="match status" value="1"/>
</dbReference>
<dbReference type="PIRSF" id="PIRSF008716">
    <property type="entry name" value="DUF1782"/>
    <property type="match status" value="1"/>
</dbReference>
<dbReference type="SUPFAM" id="SSF54495">
    <property type="entry name" value="UBC-like"/>
    <property type="match status" value="1"/>
</dbReference>
<feature type="chain" id="PRO_0000391977" description="Ubiquitin-fold modifier-conjugating enzyme 1">
    <location>
        <begin position="1"/>
        <end position="164"/>
    </location>
</feature>
<feature type="active site" description="Glycyl thioester intermediate" evidence="1">
    <location>
        <position position="116"/>
    </location>
</feature>
<evidence type="ECO:0000250" key="1"/>
<evidence type="ECO:0000305" key="2"/>
<comment type="function">
    <text evidence="1">E2-like enzyme which forms an intermediate with UFM1 via a thioester linkage.</text>
</comment>
<comment type="similarity">
    <text evidence="2">Belongs to the ubiquitin-conjugating enzyme family. UFC1 subfamily.</text>
</comment>
<organism>
    <name type="scientific">Drosophila willistoni</name>
    <name type="common">Fruit fly</name>
    <dbReference type="NCBI Taxonomy" id="7260"/>
    <lineage>
        <taxon>Eukaryota</taxon>
        <taxon>Metazoa</taxon>
        <taxon>Ecdysozoa</taxon>
        <taxon>Arthropoda</taxon>
        <taxon>Hexapoda</taxon>
        <taxon>Insecta</taxon>
        <taxon>Pterygota</taxon>
        <taxon>Neoptera</taxon>
        <taxon>Endopterygota</taxon>
        <taxon>Diptera</taxon>
        <taxon>Brachycera</taxon>
        <taxon>Muscomorpha</taxon>
        <taxon>Ephydroidea</taxon>
        <taxon>Drosophilidae</taxon>
        <taxon>Drosophila</taxon>
        <taxon>Sophophora</taxon>
    </lineage>
</organism>